<sequence>MDPLNATGMDAFTAIHLNASWSADSGYSLAAIASIAALVSFLILFTVVGNILVVIAVLTSRALKAPQNLFLVSLATADILVATLVMPFSLANELMGYWYFGKVWCGIYLALDVLFCTSSIVHLCAISLDRYWSVTQAVEYNLKRTPKRVKCIIVIVWLISAFISSPPLLSIDSNNYISSQPQCMLNDDTWYILSSSMASFFAPCLIMILVYIRIYQVAKTRTRSMSGKEPRPDGVTQTENGLNKANSPCHGDRENGHCQCPPTPSQRTVTIGQQTDDADMDESFSSEGKGHKPQRQDSQRAKRPGLKKSSISKQSARISRVSNKSVDLFASRRKRRRSSIAEKKVSQAREKRFTFVLAVVMGVFVVCWFPFFFSYSLHAVCRDYCKIPDTLFKFFWIGYCNSSLNPAIYTIFNRDFRRAFQKILCKSWKKSF</sequence>
<proteinExistence type="inferred from homology"/>
<evidence type="ECO:0000250" key="1"/>
<evidence type="ECO:0000255" key="2"/>
<evidence type="ECO:0000255" key="3">
    <source>
        <dbReference type="PROSITE-ProRule" id="PRU00521"/>
    </source>
</evidence>
<evidence type="ECO:0000256" key="4">
    <source>
        <dbReference type="SAM" id="MobiDB-lite"/>
    </source>
</evidence>
<keyword id="KW-1003">Cell membrane</keyword>
<keyword id="KW-1015">Disulfide bond</keyword>
<keyword id="KW-0297">G-protein coupled receptor</keyword>
<keyword id="KW-0325">Glycoprotein</keyword>
<keyword id="KW-0472">Membrane</keyword>
<keyword id="KW-0675">Receptor</keyword>
<keyword id="KW-0807">Transducer</keyword>
<keyword id="KW-0812">Transmembrane</keyword>
<keyword id="KW-1133">Transmembrane helix</keyword>
<dbReference type="EMBL" id="U07743">
    <property type="protein sequence ID" value="AAA17386.1"/>
    <property type="molecule type" value="Unassigned_DNA"/>
</dbReference>
<dbReference type="PIR" id="I50829">
    <property type="entry name" value="I50829"/>
</dbReference>
<dbReference type="SMR" id="Q91081"/>
<dbReference type="GO" id="GO:0005886">
    <property type="term" value="C:plasma membrane"/>
    <property type="evidence" value="ECO:0007669"/>
    <property type="project" value="UniProtKB-SubCell"/>
</dbReference>
<dbReference type="GO" id="GO:0004938">
    <property type="term" value="F:alpha2-adrenergic receptor activity"/>
    <property type="evidence" value="ECO:0007669"/>
    <property type="project" value="InterPro"/>
</dbReference>
<dbReference type="GO" id="GO:0051379">
    <property type="term" value="F:epinephrine binding"/>
    <property type="evidence" value="ECO:0007669"/>
    <property type="project" value="TreeGrafter"/>
</dbReference>
<dbReference type="GO" id="GO:0030168">
    <property type="term" value="P:platelet activation"/>
    <property type="evidence" value="ECO:0007669"/>
    <property type="project" value="InterPro"/>
</dbReference>
<dbReference type="GO" id="GO:0006940">
    <property type="term" value="P:regulation of smooth muscle contraction"/>
    <property type="evidence" value="ECO:0007669"/>
    <property type="project" value="InterPro"/>
</dbReference>
<dbReference type="GO" id="GO:0019229">
    <property type="term" value="P:regulation of vasoconstriction"/>
    <property type="evidence" value="ECO:0007669"/>
    <property type="project" value="InterPro"/>
</dbReference>
<dbReference type="Gene3D" id="1.20.1070.10">
    <property type="entry name" value="Rhodopsin 7-helix transmembrane proteins"/>
    <property type="match status" value="1"/>
</dbReference>
<dbReference type="InterPro" id="IPR002233">
    <property type="entry name" value="ADR_fam"/>
</dbReference>
<dbReference type="InterPro" id="IPR000735">
    <property type="entry name" value="ADRA2C_rcpt"/>
</dbReference>
<dbReference type="InterPro" id="IPR000276">
    <property type="entry name" value="GPCR_Rhodpsn"/>
</dbReference>
<dbReference type="InterPro" id="IPR017452">
    <property type="entry name" value="GPCR_Rhodpsn_7TM"/>
</dbReference>
<dbReference type="PANTHER" id="PTHR24248">
    <property type="entry name" value="ADRENERGIC RECEPTOR-RELATED G-PROTEIN COUPLED RECEPTOR"/>
    <property type="match status" value="1"/>
</dbReference>
<dbReference type="PANTHER" id="PTHR24248:SF25">
    <property type="entry name" value="ALPHA-2C ADRENERGIC RECEPTOR"/>
    <property type="match status" value="1"/>
</dbReference>
<dbReference type="Pfam" id="PF00001">
    <property type="entry name" value="7tm_1"/>
    <property type="match status" value="1"/>
</dbReference>
<dbReference type="PRINTS" id="PR01103">
    <property type="entry name" value="ADRENERGICR"/>
</dbReference>
<dbReference type="PRINTS" id="PR00560">
    <property type="entry name" value="ADRENRGCA2CR"/>
</dbReference>
<dbReference type="PRINTS" id="PR00237">
    <property type="entry name" value="GPCRRHODOPSN"/>
</dbReference>
<dbReference type="SMART" id="SM01381">
    <property type="entry name" value="7TM_GPCR_Srsx"/>
    <property type="match status" value="1"/>
</dbReference>
<dbReference type="SUPFAM" id="SSF81321">
    <property type="entry name" value="Family A G protein-coupled receptor-like"/>
    <property type="match status" value="1"/>
</dbReference>
<dbReference type="PROSITE" id="PS00237">
    <property type="entry name" value="G_PROTEIN_RECEP_F1_1"/>
    <property type="match status" value="1"/>
</dbReference>
<dbReference type="PROSITE" id="PS50262">
    <property type="entry name" value="G_PROTEIN_RECEP_F1_2"/>
    <property type="match status" value="1"/>
</dbReference>
<name>ADRA2_LABOS</name>
<feature type="chain" id="PRO_0000069110" description="Alpha-2 adrenergic receptor">
    <location>
        <begin position="1"/>
        <end position="432"/>
    </location>
</feature>
<feature type="topological domain" description="Extracellular" evidence="1">
    <location>
        <begin position="1"/>
        <end position="32"/>
    </location>
</feature>
<feature type="transmembrane region" description="Helical; Name=1" evidence="1">
    <location>
        <begin position="33"/>
        <end position="57"/>
    </location>
</feature>
<feature type="topological domain" description="Cytoplasmic" evidence="1">
    <location>
        <begin position="58"/>
        <end position="69"/>
    </location>
</feature>
<feature type="transmembrane region" description="Helical; Name=2" evidence="1">
    <location>
        <begin position="70"/>
        <end position="95"/>
    </location>
</feature>
<feature type="topological domain" description="Extracellular" evidence="1">
    <location>
        <begin position="96"/>
        <end position="105"/>
    </location>
</feature>
<feature type="transmembrane region" description="Helical; Name=3" evidence="1">
    <location>
        <begin position="106"/>
        <end position="128"/>
    </location>
</feature>
<feature type="topological domain" description="Cytoplasmic" evidence="1">
    <location>
        <begin position="129"/>
        <end position="149"/>
    </location>
</feature>
<feature type="transmembrane region" description="Helical; Name=4" evidence="1">
    <location>
        <begin position="150"/>
        <end position="172"/>
    </location>
</feature>
<feature type="topological domain" description="Extracellular" evidence="1">
    <location>
        <begin position="173"/>
        <end position="188"/>
    </location>
</feature>
<feature type="transmembrane region" description="Helical; Name=5" evidence="1">
    <location>
        <begin position="189"/>
        <end position="212"/>
    </location>
</feature>
<feature type="topological domain" description="Cytoplasmic" evidence="1">
    <location>
        <begin position="213"/>
        <end position="356"/>
    </location>
</feature>
<feature type="transmembrane region" description="Helical; Name=6" evidence="1">
    <location>
        <begin position="357"/>
        <end position="380"/>
    </location>
</feature>
<feature type="topological domain" description="Extracellular" evidence="1">
    <location>
        <begin position="381"/>
        <end position="393"/>
    </location>
</feature>
<feature type="transmembrane region" description="Helical; Name=7" evidence="1">
    <location>
        <begin position="394"/>
        <end position="413"/>
    </location>
</feature>
<feature type="topological domain" description="Cytoplasmic" evidence="1">
    <location>
        <begin position="414"/>
        <end position="432"/>
    </location>
</feature>
<feature type="region of interest" description="Disordered" evidence="4">
    <location>
        <begin position="222"/>
        <end position="319"/>
    </location>
</feature>
<feature type="compositionally biased region" description="Polar residues" evidence="4">
    <location>
        <begin position="235"/>
        <end position="246"/>
    </location>
</feature>
<feature type="compositionally biased region" description="Polar residues" evidence="4">
    <location>
        <begin position="265"/>
        <end position="275"/>
    </location>
</feature>
<feature type="compositionally biased region" description="Basic and acidic residues" evidence="4">
    <location>
        <begin position="288"/>
        <end position="300"/>
    </location>
</feature>
<feature type="compositionally biased region" description="Polar residues" evidence="4">
    <location>
        <begin position="309"/>
        <end position="319"/>
    </location>
</feature>
<feature type="glycosylation site" description="N-linked (GlcNAc...) asparagine" evidence="2">
    <location>
        <position position="5"/>
    </location>
</feature>
<feature type="glycosylation site" description="N-linked (GlcNAc...) asparagine" evidence="2">
    <location>
        <position position="18"/>
    </location>
</feature>
<feature type="disulfide bond" evidence="3">
    <location>
        <begin position="105"/>
        <end position="183"/>
    </location>
</feature>
<comment type="function">
    <text>Alpha-2 adrenergic receptors mediate the catecholamine-induced inhibition of adenylate cyclase through the action of G proteins.</text>
</comment>
<comment type="subcellular location">
    <subcellularLocation>
        <location>Cell membrane</location>
        <topology>Multi-pass membrane protein</topology>
    </subcellularLocation>
</comment>
<comment type="similarity">
    <text evidence="3">Belongs to the G-protein coupled receptor 1 family.</text>
</comment>
<accession>Q91081</accession>
<organism>
    <name type="scientific">Labrus ossifagus</name>
    <name type="common">Cuckoo wrasse</name>
    <dbReference type="NCBI Taxonomy" id="30800"/>
    <lineage>
        <taxon>Eukaryota</taxon>
        <taxon>Metazoa</taxon>
        <taxon>Chordata</taxon>
        <taxon>Craniata</taxon>
        <taxon>Vertebrata</taxon>
        <taxon>Euteleostomi</taxon>
        <taxon>Actinopterygii</taxon>
        <taxon>Neopterygii</taxon>
        <taxon>Teleostei</taxon>
        <taxon>Neoteleostei</taxon>
        <taxon>Acanthomorphata</taxon>
        <taxon>Eupercaria</taxon>
        <taxon>Labriformes</taxon>
        <taxon>Labridae</taxon>
        <taxon>Labrus</taxon>
    </lineage>
</organism>
<protein>
    <recommendedName>
        <fullName>Alpha-2 adrenergic receptor</fullName>
    </recommendedName>
    <alternativeName>
        <fullName>Alpha-2 adrenoreceptor</fullName>
        <shortName>Alpha-2 adrenoceptor</shortName>
    </alternativeName>
</protein>
<reference key="1">
    <citation type="journal article" date="1993" name="Br. J. Pharmacol.">
        <title>Cloning and expression of a fish alpha 2-adrenoceptor.</title>
        <authorList>
            <person name="Svensson S.P.S."/>
            <person name="Bailey T.J."/>
            <person name="Pepperl D.J."/>
            <person name="Grundstroem N."/>
            <person name="Ala-Uotila S."/>
            <person name="Scheinin M."/>
            <person name="Karlsson J.O.G."/>
            <person name="Regan J.W."/>
        </authorList>
    </citation>
    <scope>NUCLEOTIDE SEQUENCE</scope>
</reference>